<proteinExistence type="inferred from homology"/>
<gene>
    <name type="primary">yfmR</name>
    <name type="ordered locus">BSU07370</name>
</gene>
<feature type="chain" id="PRO_0000375890" description="Uncharacterized ABC transporter ATP-binding protein YfmR">
    <location>
        <begin position="1"/>
        <end position="629"/>
    </location>
</feature>
<feature type="domain" description="ABC transporter 1" evidence="2">
    <location>
        <begin position="4"/>
        <end position="255"/>
    </location>
</feature>
<feature type="domain" description="ABC transporter 2" evidence="2">
    <location>
        <begin position="319"/>
        <end position="537"/>
    </location>
</feature>
<feature type="region of interest" description="Disordered" evidence="3">
    <location>
        <begin position="284"/>
        <end position="304"/>
    </location>
</feature>
<feature type="region of interest" description="Disordered" evidence="3">
    <location>
        <begin position="530"/>
        <end position="555"/>
    </location>
</feature>
<feature type="coiled-coil region" evidence="1">
    <location>
        <begin position="560"/>
        <end position="629"/>
    </location>
</feature>
<feature type="compositionally biased region" description="Basic and acidic residues" evidence="3">
    <location>
        <begin position="285"/>
        <end position="294"/>
    </location>
</feature>
<feature type="compositionally biased region" description="Polar residues" evidence="3">
    <location>
        <begin position="295"/>
        <end position="304"/>
    </location>
</feature>
<feature type="compositionally biased region" description="Basic and acidic residues" evidence="3">
    <location>
        <begin position="540"/>
        <end position="550"/>
    </location>
</feature>
<feature type="binding site" evidence="2">
    <location>
        <begin position="36"/>
        <end position="43"/>
    </location>
    <ligand>
        <name>ATP</name>
        <dbReference type="ChEBI" id="CHEBI:30616"/>
    </ligand>
</feature>
<feature type="binding site" evidence="2">
    <location>
        <begin position="351"/>
        <end position="358"/>
    </location>
    <ligand>
        <name>ATP</name>
        <dbReference type="ChEBI" id="CHEBI:30616"/>
    </ligand>
</feature>
<accession>O06476</accession>
<accession>Q797A4</accession>
<protein>
    <recommendedName>
        <fullName>Uncharacterized ABC transporter ATP-binding protein YfmR</fullName>
        <ecNumber>7.-.-.-</ecNumber>
    </recommendedName>
</protein>
<name>YFMR_BACSU</name>
<keyword id="KW-0067">ATP-binding</keyword>
<keyword id="KW-0175">Coiled coil</keyword>
<keyword id="KW-0547">Nucleotide-binding</keyword>
<keyword id="KW-1185">Reference proteome</keyword>
<keyword id="KW-0677">Repeat</keyword>
<keyword id="KW-1278">Translocase</keyword>
<keyword id="KW-0813">Transport</keyword>
<comment type="similarity">
    <text evidence="4">Belongs to the ABC transporter superfamily.</text>
</comment>
<evidence type="ECO:0000255" key="1"/>
<evidence type="ECO:0000255" key="2">
    <source>
        <dbReference type="PROSITE-ProRule" id="PRU00434"/>
    </source>
</evidence>
<evidence type="ECO:0000256" key="3">
    <source>
        <dbReference type="SAM" id="MobiDB-lite"/>
    </source>
</evidence>
<evidence type="ECO:0000305" key="4"/>
<reference key="1">
    <citation type="journal article" date="1997" name="Microbiology">
        <title>A 23.4 kb segment at the 69 degrees-70 degrees region of the Bacillus subtilis genome.</title>
        <authorList>
            <person name="Yamamoto H."/>
            <person name="Uchiyama S."/>
            <person name="Nugroho F.A."/>
            <person name="Sekiguchi J."/>
        </authorList>
    </citation>
    <scope>NUCLEOTIDE SEQUENCE [GENOMIC DNA]</scope>
    <source>
        <strain>168 / AC327</strain>
    </source>
</reference>
<reference key="2">
    <citation type="journal article" date="1997" name="Nature">
        <title>The complete genome sequence of the Gram-positive bacterium Bacillus subtilis.</title>
        <authorList>
            <person name="Kunst F."/>
            <person name="Ogasawara N."/>
            <person name="Moszer I."/>
            <person name="Albertini A.M."/>
            <person name="Alloni G."/>
            <person name="Azevedo V."/>
            <person name="Bertero M.G."/>
            <person name="Bessieres P."/>
            <person name="Bolotin A."/>
            <person name="Borchert S."/>
            <person name="Borriss R."/>
            <person name="Boursier L."/>
            <person name="Brans A."/>
            <person name="Braun M."/>
            <person name="Brignell S.C."/>
            <person name="Bron S."/>
            <person name="Brouillet S."/>
            <person name="Bruschi C.V."/>
            <person name="Caldwell B."/>
            <person name="Capuano V."/>
            <person name="Carter N.M."/>
            <person name="Choi S.-K."/>
            <person name="Codani J.-J."/>
            <person name="Connerton I.F."/>
            <person name="Cummings N.J."/>
            <person name="Daniel R.A."/>
            <person name="Denizot F."/>
            <person name="Devine K.M."/>
            <person name="Duesterhoeft A."/>
            <person name="Ehrlich S.D."/>
            <person name="Emmerson P.T."/>
            <person name="Entian K.-D."/>
            <person name="Errington J."/>
            <person name="Fabret C."/>
            <person name="Ferrari E."/>
            <person name="Foulger D."/>
            <person name="Fritz C."/>
            <person name="Fujita M."/>
            <person name="Fujita Y."/>
            <person name="Fuma S."/>
            <person name="Galizzi A."/>
            <person name="Galleron N."/>
            <person name="Ghim S.-Y."/>
            <person name="Glaser P."/>
            <person name="Goffeau A."/>
            <person name="Golightly E.J."/>
            <person name="Grandi G."/>
            <person name="Guiseppi G."/>
            <person name="Guy B.J."/>
            <person name="Haga K."/>
            <person name="Haiech J."/>
            <person name="Harwood C.R."/>
            <person name="Henaut A."/>
            <person name="Hilbert H."/>
            <person name="Holsappel S."/>
            <person name="Hosono S."/>
            <person name="Hullo M.-F."/>
            <person name="Itaya M."/>
            <person name="Jones L.-M."/>
            <person name="Joris B."/>
            <person name="Karamata D."/>
            <person name="Kasahara Y."/>
            <person name="Klaerr-Blanchard M."/>
            <person name="Klein C."/>
            <person name="Kobayashi Y."/>
            <person name="Koetter P."/>
            <person name="Koningstein G."/>
            <person name="Krogh S."/>
            <person name="Kumano M."/>
            <person name="Kurita K."/>
            <person name="Lapidus A."/>
            <person name="Lardinois S."/>
            <person name="Lauber J."/>
            <person name="Lazarevic V."/>
            <person name="Lee S.-M."/>
            <person name="Levine A."/>
            <person name="Liu H."/>
            <person name="Masuda S."/>
            <person name="Mauel C."/>
            <person name="Medigue C."/>
            <person name="Medina N."/>
            <person name="Mellado R.P."/>
            <person name="Mizuno M."/>
            <person name="Moestl D."/>
            <person name="Nakai S."/>
            <person name="Noback M."/>
            <person name="Noone D."/>
            <person name="O'Reilly M."/>
            <person name="Ogawa K."/>
            <person name="Ogiwara A."/>
            <person name="Oudega B."/>
            <person name="Park S.-H."/>
            <person name="Parro V."/>
            <person name="Pohl T.M."/>
            <person name="Portetelle D."/>
            <person name="Porwollik S."/>
            <person name="Prescott A.M."/>
            <person name="Presecan E."/>
            <person name="Pujic P."/>
            <person name="Purnelle B."/>
            <person name="Rapoport G."/>
            <person name="Rey M."/>
            <person name="Reynolds S."/>
            <person name="Rieger M."/>
            <person name="Rivolta C."/>
            <person name="Rocha E."/>
            <person name="Roche B."/>
            <person name="Rose M."/>
            <person name="Sadaie Y."/>
            <person name="Sato T."/>
            <person name="Scanlan E."/>
            <person name="Schleich S."/>
            <person name="Schroeter R."/>
            <person name="Scoffone F."/>
            <person name="Sekiguchi J."/>
            <person name="Sekowska A."/>
            <person name="Seror S.J."/>
            <person name="Serror P."/>
            <person name="Shin B.-S."/>
            <person name="Soldo B."/>
            <person name="Sorokin A."/>
            <person name="Tacconi E."/>
            <person name="Takagi T."/>
            <person name="Takahashi H."/>
            <person name="Takemaru K."/>
            <person name="Takeuchi M."/>
            <person name="Tamakoshi A."/>
            <person name="Tanaka T."/>
            <person name="Terpstra P."/>
            <person name="Tognoni A."/>
            <person name="Tosato V."/>
            <person name="Uchiyama S."/>
            <person name="Vandenbol M."/>
            <person name="Vannier F."/>
            <person name="Vassarotti A."/>
            <person name="Viari A."/>
            <person name="Wambutt R."/>
            <person name="Wedler E."/>
            <person name="Wedler H."/>
            <person name="Weitzenegger T."/>
            <person name="Winters P."/>
            <person name="Wipat A."/>
            <person name="Yamamoto H."/>
            <person name="Yamane K."/>
            <person name="Yasumoto K."/>
            <person name="Yata K."/>
            <person name="Yoshida K."/>
            <person name="Yoshikawa H.-F."/>
            <person name="Zumstein E."/>
            <person name="Yoshikawa H."/>
            <person name="Danchin A."/>
        </authorList>
    </citation>
    <scope>NUCLEOTIDE SEQUENCE [LARGE SCALE GENOMIC DNA]</scope>
    <source>
        <strain>168</strain>
    </source>
</reference>
<organism>
    <name type="scientific">Bacillus subtilis (strain 168)</name>
    <dbReference type="NCBI Taxonomy" id="224308"/>
    <lineage>
        <taxon>Bacteria</taxon>
        <taxon>Bacillati</taxon>
        <taxon>Bacillota</taxon>
        <taxon>Bacilli</taxon>
        <taxon>Bacillales</taxon>
        <taxon>Bacillaceae</taxon>
        <taxon>Bacillus</taxon>
    </lineage>
</organism>
<dbReference type="EC" id="7.-.-.-"/>
<dbReference type="EMBL" id="D86418">
    <property type="protein sequence ID" value="BAA20107.1"/>
    <property type="molecule type" value="Genomic_DNA"/>
</dbReference>
<dbReference type="EMBL" id="AL009126">
    <property type="protein sequence ID" value="CAB12556.1"/>
    <property type="molecule type" value="Genomic_DNA"/>
</dbReference>
<dbReference type="PIR" id="A69814">
    <property type="entry name" value="A69814"/>
</dbReference>
<dbReference type="RefSeq" id="WP_003244423.1">
    <property type="nucleotide sequence ID" value="NZ_OZ025638.1"/>
</dbReference>
<dbReference type="SMR" id="O06476"/>
<dbReference type="FunCoup" id="O06476">
    <property type="interactions" value="646"/>
</dbReference>
<dbReference type="STRING" id="224308.BSU07370"/>
<dbReference type="jPOST" id="O06476"/>
<dbReference type="PaxDb" id="224308-BSU07370"/>
<dbReference type="EnsemblBacteria" id="CAB12556">
    <property type="protein sequence ID" value="CAB12556"/>
    <property type="gene ID" value="BSU_07370"/>
</dbReference>
<dbReference type="GeneID" id="936100"/>
<dbReference type="KEGG" id="bsu:BSU07370"/>
<dbReference type="PATRIC" id="fig|224308.179.peg.799"/>
<dbReference type="eggNOG" id="COG0488">
    <property type="taxonomic scope" value="Bacteria"/>
</dbReference>
<dbReference type="InParanoid" id="O06476"/>
<dbReference type="OrthoDB" id="9760950at2"/>
<dbReference type="PhylomeDB" id="O06476"/>
<dbReference type="BioCyc" id="BSUB:BSU07370-MONOMER"/>
<dbReference type="Proteomes" id="UP000001570">
    <property type="component" value="Chromosome"/>
</dbReference>
<dbReference type="GO" id="GO:0005524">
    <property type="term" value="F:ATP binding"/>
    <property type="evidence" value="ECO:0007669"/>
    <property type="project" value="UniProtKB-KW"/>
</dbReference>
<dbReference type="GO" id="GO:0016887">
    <property type="term" value="F:ATP hydrolysis activity"/>
    <property type="evidence" value="ECO:0007669"/>
    <property type="project" value="InterPro"/>
</dbReference>
<dbReference type="GO" id="GO:0003677">
    <property type="term" value="F:DNA binding"/>
    <property type="evidence" value="ECO:0007669"/>
    <property type="project" value="InterPro"/>
</dbReference>
<dbReference type="CDD" id="cd03221">
    <property type="entry name" value="ABCF_EF-3"/>
    <property type="match status" value="2"/>
</dbReference>
<dbReference type="FunFam" id="3.40.50.300:FF:000309">
    <property type="entry name" value="ABC transporter ATP-binding protein"/>
    <property type="match status" value="1"/>
</dbReference>
<dbReference type="FunFam" id="3.40.50.300:FF:000011">
    <property type="entry name" value="Putative ABC transporter ATP-binding component"/>
    <property type="match status" value="1"/>
</dbReference>
<dbReference type="Gene3D" id="3.40.50.300">
    <property type="entry name" value="P-loop containing nucleotide triphosphate hydrolases"/>
    <property type="match status" value="2"/>
</dbReference>
<dbReference type="Gene3D" id="1.10.287.380">
    <property type="entry name" value="Valyl-tRNA synthetase, C-terminal domain"/>
    <property type="match status" value="1"/>
</dbReference>
<dbReference type="InterPro" id="IPR003593">
    <property type="entry name" value="AAA+_ATPase"/>
</dbReference>
<dbReference type="InterPro" id="IPR032524">
    <property type="entry name" value="ABC_tran_C"/>
</dbReference>
<dbReference type="InterPro" id="IPR032781">
    <property type="entry name" value="ABC_tran_Xtn"/>
</dbReference>
<dbReference type="InterPro" id="IPR003439">
    <property type="entry name" value="ABC_transporter-like_ATP-bd"/>
</dbReference>
<dbReference type="InterPro" id="IPR017871">
    <property type="entry name" value="ABC_transporter-like_CS"/>
</dbReference>
<dbReference type="InterPro" id="IPR051309">
    <property type="entry name" value="ABCF_ATPase"/>
</dbReference>
<dbReference type="InterPro" id="IPR027417">
    <property type="entry name" value="P-loop_NTPase"/>
</dbReference>
<dbReference type="InterPro" id="IPR037118">
    <property type="entry name" value="Val-tRNA_synth_C_sf"/>
</dbReference>
<dbReference type="PANTHER" id="PTHR42855">
    <property type="entry name" value="ABC TRANSPORTER ATP-BINDING SUBUNIT"/>
    <property type="match status" value="1"/>
</dbReference>
<dbReference type="PANTHER" id="PTHR42855:SF1">
    <property type="entry name" value="ABC TRANSPORTER DOMAIN-CONTAINING PROTEIN"/>
    <property type="match status" value="1"/>
</dbReference>
<dbReference type="Pfam" id="PF00005">
    <property type="entry name" value="ABC_tran"/>
    <property type="match status" value="2"/>
</dbReference>
<dbReference type="Pfam" id="PF16326">
    <property type="entry name" value="ABC_tran_CTD"/>
    <property type="match status" value="1"/>
</dbReference>
<dbReference type="Pfam" id="PF12848">
    <property type="entry name" value="ABC_tran_Xtn"/>
    <property type="match status" value="1"/>
</dbReference>
<dbReference type="SMART" id="SM00382">
    <property type="entry name" value="AAA"/>
    <property type="match status" value="2"/>
</dbReference>
<dbReference type="SUPFAM" id="SSF52540">
    <property type="entry name" value="P-loop containing nucleoside triphosphate hydrolases"/>
    <property type="match status" value="2"/>
</dbReference>
<dbReference type="PROSITE" id="PS00211">
    <property type="entry name" value="ABC_TRANSPORTER_1"/>
    <property type="match status" value="1"/>
</dbReference>
<dbReference type="PROSITE" id="PS50893">
    <property type="entry name" value="ABC_TRANSPORTER_2"/>
    <property type="match status" value="2"/>
</dbReference>
<sequence length="629" mass="71121">MSILKAENLYKTYGDKTLFDHISFHIEENERIGLIGPNGTGKSTLLKVIAGLESIEEGEITKSGSVQVEFLHQDPELPAGQTVLEHIYSGESAVMKTLREYEKALYELGKDPENEQRQKHLLAAQAKMDANNAWDANTLAKTVLSKLGVNDVTKPVNELSGGQKKRVAIAKNLIQPADLLILDEPTNHLDNETIEWLEGYLSQYPGAVMLVTHDRYFLNRVTNRIYELERGSLYTYKGNYEVFLEKRAEREAQAEQKETKRQNLLRRELAWLRRGAKARSTKQKARIDRVETLKEQTGPQSSGSLDFAIGSHRLGKQVIEAENVMIAYDGRMLVDRFNELVIPGERIGIIGPNGIGKTTLLNALAGRHTPDGGDITIGQTVRIGYYTQDHSEMNGELKVIDYIKETAEVVKTADGDMITAEQMLERFLFPRSMQQTYIRKLSGGEKRRLYLLQVLMQEPNVLFLDEPTNDLDTETLSVLEDYIDQFPGVVITVSHDRYFLDRVVDRLIVFEGNGVISRFQGSYSDYMEESKAKKAAPKPAAEEKTAEAEPKKKRKKLSYKDQLEWDGIEDKIAQLEEKHEQLEADIAAAGSDFGKIQELMAEQAKTAEELEAAMDRWTELSLMIEELES</sequence>